<proteinExistence type="inferred from homology"/>
<name>PG062_VACCC</name>
<dbReference type="EMBL" id="M35027">
    <property type="protein sequence ID" value="AAA48036.1"/>
    <property type="molecule type" value="Genomic_DNA"/>
</dbReference>
<dbReference type="PIR" id="A25726">
    <property type="entry name" value="WMVZ12"/>
</dbReference>
<dbReference type="Proteomes" id="UP000008269">
    <property type="component" value="Segment"/>
</dbReference>
<dbReference type="GO" id="GO:0044423">
    <property type="term" value="C:virion component"/>
    <property type="evidence" value="ECO:0007669"/>
    <property type="project" value="UniProtKB-KW"/>
</dbReference>
<dbReference type="GO" id="GO:0003677">
    <property type="term" value="F:DNA binding"/>
    <property type="evidence" value="ECO:0007669"/>
    <property type="project" value="UniProtKB-KW"/>
</dbReference>
<dbReference type="GO" id="GO:0052170">
    <property type="term" value="P:symbiont-mediated suppression of host innate immune response"/>
    <property type="evidence" value="ECO:0007669"/>
    <property type="project" value="UniProtKB-KW"/>
</dbReference>
<dbReference type="GO" id="GO:0019082">
    <property type="term" value="P:viral protein processing"/>
    <property type="evidence" value="ECO:0007669"/>
    <property type="project" value="InterPro"/>
</dbReference>
<dbReference type="InterPro" id="IPR006854">
    <property type="entry name" value="Phosphoprotein_F17"/>
</dbReference>
<dbReference type="Pfam" id="PF04767">
    <property type="entry name" value="Pox_F17"/>
    <property type="match status" value="1"/>
</dbReference>
<dbReference type="PIRSF" id="PIRSF003688">
    <property type="entry name" value="VAC_PP"/>
    <property type="match status" value="1"/>
</dbReference>
<keyword id="KW-0238">DNA-binding</keyword>
<keyword id="KW-0945">Host-virus interaction</keyword>
<keyword id="KW-1090">Inhibition of host innate immune response by virus</keyword>
<keyword id="KW-0426">Late protein</keyword>
<keyword id="KW-0597">Phosphoprotein</keyword>
<keyword id="KW-1185">Reference proteome</keyword>
<keyword id="KW-0899">Viral immunoevasion</keyword>
<keyword id="KW-0946">Virion</keyword>
<evidence type="ECO:0000250" key="1">
    <source>
        <dbReference type="UniProtKB" id="P07396"/>
    </source>
</evidence>
<evidence type="ECO:0000256" key="2">
    <source>
        <dbReference type="SAM" id="MobiDB-lite"/>
    </source>
</evidence>
<evidence type="ECO:0000305" key="3"/>
<accession>P68454</accession>
<accession>P07397</accession>
<organismHost>
    <name type="scientific">Homo sapiens</name>
    <name type="common">Human</name>
    <dbReference type="NCBI Taxonomy" id="9606"/>
</organismHost>
<protein>
    <recommendedName>
        <fullName>Phosphoprotein OPG062</fullName>
    </recommendedName>
    <alternativeName>
        <fullName>Phosphoprotein F17</fullName>
    </alternativeName>
</protein>
<sequence length="101" mass="11336">MNSHFASAHTPFYINTKEGRYLVLKAVKVCDVRTVECEGSKASCVLKVDKPSSPACERRPSSPSRCERMNNPGKQVPFMRTDMLQNMFAANRDNVASRLLN</sequence>
<organism>
    <name type="scientific">Vaccinia virus (strain Copenhagen)</name>
    <name type="common">VACV</name>
    <dbReference type="NCBI Taxonomy" id="10249"/>
    <lineage>
        <taxon>Viruses</taxon>
        <taxon>Varidnaviria</taxon>
        <taxon>Bamfordvirae</taxon>
        <taxon>Nucleocytoviricota</taxon>
        <taxon>Pokkesviricetes</taxon>
        <taxon>Chitovirales</taxon>
        <taxon>Poxviridae</taxon>
        <taxon>Chordopoxvirinae</taxon>
        <taxon>Orthopoxvirus</taxon>
        <taxon>Vaccinia virus</taxon>
    </lineage>
</organism>
<gene>
    <name type="primary">OPG062</name>
    <name type="ORF">F17R</name>
</gene>
<reference key="1">
    <citation type="journal article" date="1990" name="Virology">
        <title>The complete DNA sequence of vaccinia virus.</title>
        <authorList>
            <person name="Goebel S.J."/>
            <person name="Johnson G.P."/>
            <person name="Perkus M.E."/>
            <person name="Davis S.W."/>
            <person name="Winslow J.P."/>
            <person name="Paoletti E."/>
        </authorList>
    </citation>
    <scope>NUCLEOTIDE SEQUENCE [LARGE SCALE GENOMIC DNA]</scope>
</reference>
<reference key="2">
    <citation type="journal article" date="1990" name="Virology">
        <title>Appendix to 'The complete DNA sequence of vaccinia virus'.</title>
        <authorList>
            <person name="Goebel S.J."/>
            <person name="Johnson G.P."/>
            <person name="Perkus M.E."/>
            <person name="Davis S.W."/>
            <person name="Winslow J.P."/>
            <person name="Paoletti E."/>
        </authorList>
    </citation>
    <scope>NUCLEOTIDE SEQUENCE [LARGE SCALE GENOMIC DNA]</scope>
</reference>
<comment type="function">
    <text evidence="1">Plays an essential role in virion assembly and morphogenesis. Also plays a role in the inhibition of host immune response by dysregulating mTOR. Sequesters host RICTOR and RPTOR, thereby disrupting mTORC1 and mTORC2 crosstalk. In turn, blocks the host antiviral response in part through mTOR-dependent degradation of cGAS, the primary poxvirus sensor.</text>
</comment>
<comment type="subunit">
    <text evidence="1">Self-associates to form high molecular-weight forms. Interacts with protein OPG157. Interacts with host RICTOR and RPTOR; these interactions disrupt the mTORC1 and mTORC2 crosstalk.</text>
</comment>
<comment type="subcellular location">
    <subcellularLocation>
        <location evidence="1">Virion</location>
    </subcellularLocation>
    <text evidence="1">Major component of the virion comprising about 10% of the virion mass.</text>
</comment>
<comment type="PTM">
    <text evidence="1">Phosphorylated on two serines. While these phosphorylations do not play a role in virion assembly; they are essential for the interaction with host RICTOR and RPTOR.</text>
</comment>
<comment type="miscellaneous">
    <text evidence="1">Originally annotated as the product of the F18R open reading frame (protein F18), it is now referred as protein F17 since there are only 17 open reading frames in the HindIII fragment.</text>
</comment>
<comment type="similarity">
    <text evidence="3">Belongs to the orthopoxvirus OPG062 family.</text>
</comment>
<feature type="chain" id="PRO_0000099518" description="Phosphoprotein OPG062">
    <location>
        <begin position="1"/>
        <end position="101"/>
    </location>
</feature>
<feature type="region of interest" description="Disordered" evidence="2">
    <location>
        <begin position="51"/>
        <end position="73"/>
    </location>
</feature>
<feature type="compositionally biased region" description="Basic and acidic residues" evidence="2">
    <location>
        <begin position="56"/>
        <end position="68"/>
    </location>
</feature>
<feature type="modified residue" description="Phosphoserine" evidence="1">
    <location>
        <position position="53"/>
    </location>
</feature>
<feature type="modified residue" description="Phosphoserine" evidence="1">
    <location>
        <position position="62"/>
    </location>
</feature>